<name>NOP9_PICGU</name>
<proteinExistence type="inferred from homology"/>
<feature type="chain" id="PRO_0000407827" description="Nucleolar protein 9">
    <location>
        <begin position="1"/>
        <end position="697"/>
    </location>
</feature>
<feature type="repeat" description="Pumilio 1">
    <location>
        <begin position="105"/>
        <end position="140"/>
    </location>
</feature>
<feature type="repeat" description="Pumilio 2">
    <location>
        <begin position="141"/>
        <end position="176"/>
    </location>
</feature>
<feature type="repeat" description="Pumilio 3">
    <location>
        <begin position="198"/>
        <end position="234"/>
    </location>
</feature>
<feature type="repeat" description="Pumilio 4">
    <location>
        <begin position="283"/>
        <end position="319"/>
    </location>
</feature>
<feature type="repeat" description="Pumilio 5">
    <location>
        <begin position="332"/>
        <end position="369"/>
    </location>
</feature>
<feature type="repeat" description="Pumilio 6">
    <location>
        <begin position="371"/>
        <end position="407"/>
    </location>
</feature>
<feature type="repeat" description="Pumilio 7">
    <location>
        <begin position="523"/>
        <end position="557"/>
    </location>
</feature>
<feature type="repeat" description="Pumilio 8">
    <location>
        <begin position="567"/>
        <end position="605"/>
    </location>
</feature>
<feature type="region of interest" description="Disordered" evidence="2">
    <location>
        <begin position="22"/>
        <end position="54"/>
    </location>
</feature>
<feature type="region of interest" description="Disordered" evidence="2">
    <location>
        <begin position="654"/>
        <end position="697"/>
    </location>
</feature>
<feature type="compositionally biased region" description="Basic and acidic residues" evidence="2">
    <location>
        <begin position="35"/>
        <end position="47"/>
    </location>
</feature>
<feature type="compositionally biased region" description="Basic and acidic residues" evidence="2">
    <location>
        <begin position="654"/>
        <end position="691"/>
    </location>
</feature>
<dbReference type="EMBL" id="CH408155">
    <property type="protein sequence ID" value="EDK36511.2"/>
    <property type="molecule type" value="Genomic_DNA"/>
</dbReference>
<dbReference type="RefSeq" id="XP_001487232.1">
    <property type="nucleotide sequence ID" value="XM_001487182.1"/>
</dbReference>
<dbReference type="SMR" id="A5DBF4"/>
<dbReference type="FunCoup" id="A5DBF4">
    <property type="interactions" value="920"/>
</dbReference>
<dbReference type="STRING" id="294746.A5DBF4"/>
<dbReference type="GeneID" id="5128813"/>
<dbReference type="KEGG" id="pgu:PGUG_00609"/>
<dbReference type="VEuPathDB" id="FungiDB:PGUG_00609"/>
<dbReference type="eggNOG" id="KOG2188">
    <property type="taxonomic scope" value="Eukaryota"/>
</dbReference>
<dbReference type="HOGENOM" id="CLU_008720_1_1_1"/>
<dbReference type="InParanoid" id="A5DBF4"/>
<dbReference type="OMA" id="CNSYGSH"/>
<dbReference type="OrthoDB" id="392571at2759"/>
<dbReference type="Proteomes" id="UP000001997">
    <property type="component" value="Unassembled WGS sequence"/>
</dbReference>
<dbReference type="GO" id="GO:0030686">
    <property type="term" value="C:90S preribosome"/>
    <property type="evidence" value="ECO:0007669"/>
    <property type="project" value="EnsemblFungi"/>
</dbReference>
<dbReference type="GO" id="GO:0005730">
    <property type="term" value="C:nucleolus"/>
    <property type="evidence" value="ECO:0007669"/>
    <property type="project" value="UniProtKB-SubCell"/>
</dbReference>
<dbReference type="GO" id="GO:0030688">
    <property type="term" value="C:preribosome, small subunit precursor"/>
    <property type="evidence" value="ECO:0007669"/>
    <property type="project" value="EnsemblFungi"/>
</dbReference>
<dbReference type="GO" id="GO:0032040">
    <property type="term" value="C:small-subunit processome"/>
    <property type="evidence" value="ECO:0007669"/>
    <property type="project" value="EnsemblFungi"/>
</dbReference>
<dbReference type="GO" id="GO:0003729">
    <property type="term" value="F:mRNA binding"/>
    <property type="evidence" value="ECO:0007669"/>
    <property type="project" value="UniProtKB-ARBA"/>
</dbReference>
<dbReference type="GO" id="GO:0000480">
    <property type="term" value="P:endonucleolytic cleavage in 5'-ETS of tricistronic rRNA transcript (SSU-rRNA, 5.8S rRNA, LSU-rRNA)"/>
    <property type="evidence" value="ECO:0007669"/>
    <property type="project" value="EnsemblFungi"/>
</dbReference>
<dbReference type="GO" id="GO:0000447">
    <property type="term" value="P:endonucleolytic cleavage in ITS1 to separate SSU-rRNA from 5.8S rRNA and LSU-rRNA from tricistronic rRNA transcript (SSU-rRNA, 5.8S rRNA, LSU-rRNA)"/>
    <property type="evidence" value="ECO:0007669"/>
    <property type="project" value="EnsemblFungi"/>
</dbReference>
<dbReference type="GO" id="GO:0000472">
    <property type="term" value="P:endonucleolytic cleavage to generate mature 5'-end of SSU-rRNA from (SSU-rRNA, 5.8S rRNA, LSU-rRNA)"/>
    <property type="evidence" value="ECO:0007669"/>
    <property type="project" value="EnsemblFungi"/>
</dbReference>
<dbReference type="GO" id="GO:0010629">
    <property type="term" value="P:negative regulation of gene expression"/>
    <property type="evidence" value="ECO:0007669"/>
    <property type="project" value="UniProtKB-ARBA"/>
</dbReference>
<dbReference type="GO" id="GO:0010608">
    <property type="term" value="P:post-transcriptional regulation of gene expression"/>
    <property type="evidence" value="ECO:0007669"/>
    <property type="project" value="UniProtKB-ARBA"/>
</dbReference>
<dbReference type="GO" id="GO:0065008">
    <property type="term" value="P:regulation of biological quality"/>
    <property type="evidence" value="ECO:0007669"/>
    <property type="project" value="UniProtKB-ARBA"/>
</dbReference>
<dbReference type="GO" id="GO:0000056">
    <property type="term" value="P:ribosomal small subunit export from nucleus"/>
    <property type="evidence" value="ECO:0007669"/>
    <property type="project" value="EnsemblFungi"/>
</dbReference>
<dbReference type="Gene3D" id="1.25.10.10">
    <property type="entry name" value="Leucine-rich Repeat Variant"/>
    <property type="match status" value="3"/>
</dbReference>
<dbReference type="InterPro" id="IPR011989">
    <property type="entry name" value="ARM-like"/>
</dbReference>
<dbReference type="InterPro" id="IPR016024">
    <property type="entry name" value="ARM-type_fold"/>
</dbReference>
<dbReference type="InterPro" id="IPR040000">
    <property type="entry name" value="NOP9"/>
</dbReference>
<dbReference type="InterPro" id="IPR033133">
    <property type="entry name" value="PUM-HD"/>
</dbReference>
<dbReference type="InterPro" id="IPR001313">
    <property type="entry name" value="Pumilio_RNA-bd_rpt"/>
</dbReference>
<dbReference type="PANTHER" id="PTHR13102">
    <property type="entry name" value="NUCLEOLAR PROTEIN 9"/>
    <property type="match status" value="1"/>
</dbReference>
<dbReference type="PANTHER" id="PTHR13102:SF0">
    <property type="entry name" value="NUCLEOLAR PROTEIN 9"/>
    <property type="match status" value="1"/>
</dbReference>
<dbReference type="Pfam" id="PF22493">
    <property type="entry name" value="PUF_NOP9"/>
    <property type="match status" value="1"/>
</dbReference>
<dbReference type="SMART" id="SM00025">
    <property type="entry name" value="Pumilio"/>
    <property type="match status" value="8"/>
</dbReference>
<dbReference type="SUPFAM" id="SSF48371">
    <property type="entry name" value="ARM repeat"/>
    <property type="match status" value="1"/>
</dbReference>
<dbReference type="PROSITE" id="PS50303">
    <property type="entry name" value="PUM_HD"/>
    <property type="match status" value="1"/>
</dbReference>
<keyword id="KW-0539">Nucleus</keyword>
<keyword id="KW-1185">Reference proteome</keyword>
<keyword id="KW-0677">Repeat</keyword>
<keyword id="KW-0690">Ribosome biogenesis</keyword>
<keyword id="KW-0698">rRNA processing</keyword>
<sequence length="697" mass="80296">MSQPRCFMQDLIVSSSPENFSITSMGPKVRGRRAPNRETREAKRQEDLVEDEQISEPTSNLTTPFFGLVDASEIEYFKSAESTLNVTSFESTEERDAFINSVLDEASGKELKLVTNQICSKLMERIILFGGDQQLISIFKSFSNHFVSLAHHKYSSHVLETLLVRIAGLVEKELARSAEDAADQEVTVEHLFITMMQEFYPHINEMITHQYASHVLRLLILILASKKLPSALTANSTLRSKKSKIARKMIEIKDNEDFDRSFETPPSFKDELKKVCKCISENKTMKEMRELSIHKIASPVIQLVIQVEGLVDKERSVWHLVFLPESNSEDPQEEAFVEHLLSDSVGSHFFESIIKNGGARPKYIERLYKLYMKDRIMKLARRSTTGVYIVQALMFKLRPNEVEFILDEVIPELSNLVSIVDNQNIDLGRSVIDASISRSNYRRDDIISQLLSKFAPNFNPKNPSQNDNYDLLENTLLLSSSTLGNTRDDWPTAEERRNALFLEKLLDYDTSFLLAVWTSFLAMPKERFLQMCFHGVFSHVVEHALAVIPASIGESKEVNILRKRLLNVFQGSIVSLACNAYGSHIVDKLWSFTVLMKMYKERFATEMKAESHKVKESTYGRLVWKNWSMELFLRKKYDWSQLIKVQDEEYHNEGAEAETERVKRPIELKMEQLAKKNEKSSLDSTNNDERNKRQRIR</sequence>
<organism>
    <name type="scientific">Meyerozyma guilliermondii (strain ATCC 6260 / CBS 566 / DSM 6381 / JCM 1539 / NBRC 10279 / NRRL Y-324)</name>
    <name type="common">Yeast</name>
    <name type="synonym">Candida guilliermondii</name>
    <dbReference type="NCBI Taxonomy" id="294746"/>
    <lineage>
        <taxon>Eukaryota</taxon>
        <taxon>Fungi</taxon>
        <taxon>Dikarya</taxon>
        <taxon>Ascomycota</taxon>
        <taxon>Saccharomycotina</taxon>
        <taxon>Pichiomycetes</taxon>
        <taxon>Debaryomycetaceae</taxon>
        <taxon>Meyerozyma</taxon>
    </lineage>
</organism>
<evidence type="ECO:0000250" key="1"/>
<evidence type="ECO:0000256" key="2">
    <source>
        <dbReference type="SAM" id="MobiDB-lite"/>
    </source>
</evidence>
<evidence type="ECO:0000305" key="3"/>
<gene>
    <name type="primary">NOP9</name>
    <name type="ORF">PGUG_00609</name>
</gene>
<reference key="1">
    <citation type="journal article" date="2009" name="Nature">
        <title>Evolution of pathogenicity and sexual reproduction in eight Candida genomes.</title>
        <authorList>
            <person name="Butler G."/>
            <person name="Rasmussen M.D."/>
            <person name="Lin M.F."/>
            <person name="Santos M.A.S."/>
            <person name="Sakthikumar S."/>
            <person name="Munro C.A."/>
            <person name="Rheinbay E."/>
            <person name="Grabherr M."/>
            <person name="Forche A."/>
            <person name="Reedy J.L."/>
            <person name="Agrafioti I."/>
            <person name="Arnaud M.B."/>
            <person name="Bates S."/>
            <person name="Brown A.J.P."/>
            <person name="Brunke S."/>
            <person name="Costanzo M.C."/>
            <person name="Fitzpatrick D.A."/>
            <person name="de Groot P.W.J."/>
            <person name="Harris D."/>
            <person name="Hoyer L.L."/>
            <person name="Hube B."/>
            <person name="Klis F.M."/>
            <person name="Kodira C."/>
            <person name="Lennard N."/>
            <person name="Logue M.E."/>
            <person name="Martin R."/>
            <person name="Neiman A.M."/>
            <person name="Nikolaou E."/>
            <person name="Quail M.A."/>
            <person name="Quinn J."/>
            <person name="Santos M.C."/>
            <person name="Schmitzberger F.F."/>
            <person name="Sherlock G."/>
            <person name="Shah P."/>
            <person name="Silverstein K.A.T."/>
            <person name="Skrzypek M.S."/>
            <person name="Soll D."/>
            <person name="Staggs R."/>
            <person name="Stansfield I."/>
            <person name="Stumpf M.P.H."/>
            <person name="Sudbery P.E."/>
            <person name="Srikantha T."/>
            <person name="Zeng Q."/>
            <person name="Berman J."/>
            <person name="Berriman M."/>
            <person name="Heitman J."/>
            <person name="Gow N.A.R."/>
            <person name="Lorenz M.C."/>
            <person name="Birren B.W."/>
            <person name="Kellis M."/>
            <person name="Cuomo C.A."/>
        </authorList>
    </citation>
    <scope>NUCLEOTIDE SEQUENCE [LARGE SCALE GENOMIC DNA]</scope>
    <source>
        <strain>ATCC 6260 / CBS 566 / DSM 6381 / JCM 1539 / NBRC 10279 / NRRL Y-324</strain>
    </source>
</reference>
<protein>
    <recommendedName>
        <fullName>Nucleolar protein 9</fullName>
    </recommendedName>
    <alternativeName>
        <fullName>Pumilio domain-containing protein NOP9</fullName>
    </alternativeName>
</protein>
<comment type="function">
    <text evidence="1">RNA-binding nucleolar protein required for pre-rRNA processing. Involved in production of 18S rRNA and assembly of small ribosomal subunit (By similarity).</text>
</comment>
<comment type="subcellular location">
    <subcellularLocation>
        <location evidence="1">Nucleus</location>
        <location evidence="1">Nucleolus</location>
    </subcellularLocation>
</comment>
<comment type="similarity">
    <text evidence="3">Belongs to the NOP9 family.</text>
</comment>
<accession>A5DBF4</accession>